<name>TRPA_CHLCH</name>
<reference key="1">
    <citation type="submission" date="2005-08" db="EMBL/GenBank/DDBJ databases">
        <title>Complete sequence of Chlorobium chlorochromatii CaD3.</title>
        <authorList>
            <consortium name="US DOE Joint Genome Institute"/>
            <person name="Copeland A."/>
            <person name="Lucas S."/>
            <person name="Lapidus A."/>
            <person name="Barry K."/>
            <person name="Detter J.C."/>
            <person name="Glavina T."/>
            <person name="Hammon N."/>
            <person name="Israni S."/>
            <person name="Pitluck S."/>
            <person name="Bryant D."/>
            <person name="Schmutz J."/>
            <person name="Larimer F."/>
            <person name="Land M."/>
            <person name="Kyrpides N."/>
            <person name="Ivanova N."/>
            <person name="Richardson P."/>
        </authorList>
    </citation>
    <scope>NUCLEOTIDE SEQUENCE [LARGE SCALE GENOMIC DNA]</scope>
    <source>
        <strain>CaD3</strain>
    </source>
</reference>
<organism>
    <name type="scientific">Chlorobium chlorochromatii (strain CaD3)</name>
    <dbReference type="NCBI Taxonomy" id="340177"/>
    <lineage>
        <taxon>Bacteria</taxon>
        <taxon>Pseudomonadati</taxon>
        <taxon>Chlorobiota</taxon>
        <taxon>Chlorobiia</taxon>
        <taxon>Chlorobiales</taxon>
        <taxon>Chlorobiaceae</taxon>
        <taxon>Chlorobium/Pelodictyon group</taxon>
        <taxon>Chlorobium</taxon>
    </lineage>
</organism>
<accession>Q3AR00</accession>
<keyword id="KW-0028">Amino-acid biosynthesis</keyword>
<keyword id="KW-0057">Aromatic amino acid biosynthesis</keyword>
<keyword id="KW-0456">Lyase</keyword>
<keyword id="KW-0822">Tryptophan biosynthesis</keyword>
<sequence>MAQNRITRLMQQQKKLLIAYYMPEFPVAGATLPVLEALQEHGADIIELGIPYSDPIGDGPVIQNAAHTAIRNGVTLRKVLELVRKARNGEGCKKITVPIVLMGYSNPLFAYGGDCFLADAIDSGVDGVLIPDFPPEEAIDYLDRAKNVGLSVIFLIAPVTSPERIEFIDSLSTDFSYCLAVNATTGTAKLSGHAGDAAVEEYLHRVRQHTKKKFVVGFGIRDKERVESMWKLADGAVVGTALLEQLAASTTPQECAERAGTFWQSLR</sequence>
<gene>
    <name evidence="1" type="primary">trpA</name>
    <name type="ordered locus">Cag_1315</name>
</gene>
<proteinExistence type="inferred from homology"/>
<feature type="chain" id="PRO_1000018186" description="Tryptophan synthase alpha chain">
    <location>
        <begin position="1"/>
        <end position="267"/>
    </location>
</feature>
<feature type="active site" description="Proton acceptor" evidence="1">
    <location>
        <position position="47"/>
    </location>
</feature>
<feature type="active site" description="Proton acceptor" evidence="1">
    <location>
        <position position="58"/>
    </location>
</feature>
<dbReference type="EC" id="4.2.1.20" evidence="1"/>
<dbReference type="EMBL" id="CP000108">
    <property type="protein sequence ID" value="ABB28575.1"/>
    <property type="molecule type" value="Genomic_DNA"/>
</dbReference>
<dbReference type="SMR" id="Q3AR00"/>
<dbReference type="STRING" id="340177.Cag_1315"/>
<dbReference type="KEGG" id="cch:Cag_1315"/>
<dbReference type="eggNOG" id="COG0159">
    <property type="taxonomic scope" value="Bacteria"/>
</dbReference>
<dbReference type="HOGENOM" id="CLU_016734_0_4_10"/>
<dbReference type="OrthoDB" id="9804578at2"/>
<dbReference type="UniPathway" id="UPA00035">
    <property type="reaction ID" value="UER00044"/>
</dbReference>
<dbReference type="GO" id="GO:0005829">
    <property type="term" value="C:cytosol"/>
    <property type="evidence" value="ECO:0007669"/>
    <property type="project" value="TreeGrafter"/>
</dbReference>
<dbReference type="GO" id="GO:0004834">
    <property type="term" value="F:tryptophan synthase activity"/>
    <property type="evidence" value="ECO:0007669"/>
    <property type="project" value="UniProtKB-UniRule"/>
</dbReference>
<dbReference type="CDD" id="cd04724">
    <property type="entry name" value="Tryptophan_synthase_alpha"/>
    <property type="match status" value="1"/>
</dbReference>
<dbReference type="Gene3D" id="3.20.20.70">
    <property type="entry name" value="Aldolase class I"/>
    <property type="match status" value="1"/>
</dbReference>
<dbReference type="HAMAP" id="MF_00131">
    <property type="entry name" value="Trp_synth_alpha"/>
    <property type="match status" value="1"/>
</dbReference>
<dbReference type="InterPro" id="IPR013785">
    <property type="entry name" value="Aldolase_TIM"/>
</dbReference>
<dbReference type="InterPro" id="IPR011060">
    <property type="entry name" value="RibuloseP-bd_barrel"/>
</dbReference>
<dbReference type="InterPro" id="IPR018204">
    <property type="entry name" value="Trp_synthase_alpha_AS"/>
</dbReference>
<dbReference type="InterPro" id="IPR002028">
    <property type="entry name" value="Trp_synthase_suA"/>
</dbReference>
<dbReference type="NCBIfam" id="TIGR00262">
    <property type="entry name" value="trpA"/>
    <property type="match status" value="1"/>
</dbReference>
<dbReference type="PANTHER" id="PTHR43406:SF1">
    <property type="entry name" value="TRYPTOPHAN SYNTHASE ALPHA CHAIN, CHLOROPLASTIC"/>
    <property type="match status" value="1"/>
</dbReference>
<dbReference type="PANTHER" id="PTHR43406">
    <property type="entry name" value="TRYPTOPHAN SYNTHASE, ALPHA CHAIN"/>
    <property type="match status" value="1"/>
</dbReference>
<dbReference type="Pfam" id="PF00290">
    <property type="entry name" value="Trp_syntA"/>
    <property type="match status" value="1"/>
</dbReference>
<dbReference type="SUPFAM" id="SSF51366">
    <property type="entry name" value="Ribulose-phoshate binding barrel"/>
    <property type="match status" value="1"/>
</dbReference>
<dbReference type="PROSITE" id="PS00167">
    <property type="entry name" value="TRP_SYNTHASE_ALPHA"/>
    <property type="match status" value="1"/>
</dbReference>
<comment type="function">
    <text evidence="1">The alpha subunit is responsible for the aldol cleavage of indoleglycerol phosphate to indole and glyceraldehyde 3-phosphate.</text>
</comment>
<comment type="catalytic activity">
    <reaction evidence="1">
        <text>(1S,2R)-1-C-(indol-3-yl)glycerol 3-phosphate + L-serine = D-glyceraldehyde 3-phosphate + L-tryptophan + H2O</text>
        <dbReference type="Rhea" id="RHEA:10532"/>
        <dbReference type="ChEBI" id="CHEBI:15377"/>
        <dbReference type="ChEBI" id="CHEBI:33384"/>
        <dbReference type="ChEBI" id="CHEBI:57912"/>
        <dbReference type="ChEBI" id="CHEBI:58866"/>
        <dbReference type="ChEBI" id="CHEBI:59776"/>
        <dbReference type="EC" id="4.2.1.20"/>
    </reaction>
</comment>
<comment type="pathway">
    <text evidence="1">Amino-acid biosynthesis; L-tryptophan biosynthesis; L-tryptophan from chorismate: step 5/5.</text>
</comment>
<comment type="subunit">
    <text evidence="1">Tetramer of two alpha and two beta chains.</text>
</comment>
<comment type="similarity">
    <text evidence="1">Belongs to the TrpA family.</text>
</comment>
<protein>
    <recommendedName>
        <fullName evidence="1">Tryptophan synthase alpha chain</fullName>
        <ecNumber evidence="1">4.2.1.20</ecNumber>
    </recommendedName>
</protein>
<evidence type="ECO:0000255" key="1">
    <source>
        <dbReference type="HAMAP-Rule" id="MF_00131"/>
    </source>
</evidence>